<protein>
    <recommendedName>
        <fullName evidence="1">Small ribosomal subunit protein uS2</fullName>
    </recommendedName>
    <alternativeName>
        <fullName evidence="3">30S ribosomal protein S2</fullName>
    </alternativeName>
</protein>
<organism>
    <name type="scientific">Sphingopyxis alaskensis (strain DSM 13593 / LMG 18877 / RB2256)</name>
    <name type="common">Sphingomonas alaskensis</name>
    <dbReference type="NCBI Taxonomy" id="317655"/>
    <lineage>
        <taxon>Bacteria</taxon>
        <taxon>Pseudomonadati</taxon>
        <taxon>Pseudomonadota</taxon>
        <taxon>Alphaproteobacteria</taxon>
        <taxon>Sphingomonadales</taxon>
        <taxon>Sphingomonadaceae</taxon>
        <taxon>Sphingopyxis</taxon>
    </lineage>
</organism>
<gene>
    <name evidence="1" type="primary">rpsB</name>
    <name type="ordered locus">Sala_1960</name>
</gene>
<reference key="1">
    <citation type="journal article" date="2009" name="Proc. Natl. Acad. Sci. U.S.A.">
        <title>The genomic basis of trophic strategy in marine bacteria.</title>
        <authorList>
            <person name="Lauro F.M."/>
            <person name="McDougald D."/>
            <person name="Thomas T."/>
            <person name="Williams T.J."/>
            <person name="Egan S."/>
            <person name="Rice S."/>
            <person name="DeMaere M.Z."/>
            <person name="Ting L."/>
            <person name="Ertan H."/>
            <person name="Johnson J."/>
            <person name="Ferriera S."/>
            <person name="Lapidus A."/>
            <person name="Anderson I."/>
            <person name="Kyrpides N."/>
            <person name="Munk A.C."/>
            <person name="Detter C."/>
            <person name="Han C.S."/>
            <person name="Brown M.V."/>
            <person name="Robb F.T."/>
            <person name="Kjelleberg S."/>
            <person name="Cavicchioli R."/>
        </authorList>
    </citation>
    <scope>NUCLEOTIDE SEQUENCE [LARGE SCALE GENOMIC DNA]</scope>
    <source>
        <strain>DSM 13593 / LMG 18877 / RB2256</strain>
    </source>
</reference>
<keyword id="KW-1185">Reference proteome</keyword>
<keyword id="KW-0687">Ribonucleoprotein</keyword>
<keyword id="KW-0689">Ribosomal protein</keyword>
<evidence type="ECO:0000255" key="1">
    <source>
        <dbReference type="HAMAP-Rule" id="MF_00291"/>
    </source>
</evidence>
<evidence type="ECO:0000256" key="2">
    <source>
        <dbReference type="SAM" id="MobiDB-lite"/>
    </source>
</evidence>
<evidence type="ECO:0000305" key="3"/>
<accession>Q1GRQ0</accession>
<sequence length="277" mass="29608">MAAPVVTMQNLIEAGAHFGHQTHRWNPRMKPYIFGARNGIHILDLSQTVPLFARALDFIASTAASGGKVLFVGTKRQAQGPIADAARASGQHFVNHRWLGGMLTNWKTISNSIKRLKTLEEQLSGDTSGLTKKEVLNKTRERDKLEMSLGGIRDMGGIPDVMFVIDANKEELAIKEANVLGIPVVAILDSNVSPDGIAFPVPANDDAARAIRLYCDAVAQAATRGGQQARADRGEDLGAAVEPVAEPALVEEAAAPVTEDEQVPAEAAAETERQSDA</sequence>
<name>RS2_SPHAL</name>
<proteinExistence type="inferred from homology"/>
<dbReference type="EMBL" id="CP000356">
    <property type="protein sequence ID" value="ABF53672.1"/>
    <property type="molecule type" value="Genomic_DNA"/>
</dbReference>
<dbReference type="RefSeq" id="WP_011542248.1">
    <property type="nucleotide sequence ID" value="NC_008048.1"/>
</dbReference>
<dbReference type="SMR" id="Q1GRQ0"/>
<dbReference type="STRING" id="317655.Sala_1960"/>
<dbReference type="KEGG" id="sal:Sala_1960"/>
<dbReference type="eggNOG" id="COG0052">
    <property type="taxonomic scope" value="Bacteria"/>
</dbReference>
<dbReference type="HOGENOM" id="CLU_040318_2_1_5"/>
<dbReference type="OrthoDB" id="9808036at2"/>
<dbReference type="Proteomes" id="UP000006578">
    <property type="component" value="Chromosome"/>
</dbReference>
<dbReference type="GO" id="GO:0022627">
    <property type="term" value="C:cytosolic small ribosomal subunit"/>
    <property type="evidence" value="ECO:0007669"/>
    <property type="project" value="TreeGrafter"/>
</dbReference>
<dbReference type="GO" id="GO:0003735">
    <property type="term" value="F:structural constituent of ribosome"/>
    <property type="evidence" value="ECO:0007669"/>
    <property type="project" value="InterPro"/>
</dbReference>
<dbReference type="GO" id="GO:0006412">
    <property type="term" value="P:translation"/>
    <property type="evidence" value="ECO:0007669"/>
    <property type="project" value="UniProtKB-UniRule"/>
</dbReference>
<dbReference type="CDD" id="cd01425">
    <property type="entry name" value="RPS2"/>
    <property type="match status" value="1"/>
</dbReference>
<dbReference type="FunFam" id="1.10.287.610:FF:000001">
    <property type="entry name" value="30S ribosomal protein S2"/>
    <property type="match status" value="1"/>
</dbReference>
<dbReference type="Gene3D" id="3.40.50.10490">
    <property type="entry name" value="Glucose-6-phosphate isomerase like protein, domain 1"/>
    <property type="match status" value="1"/>
</dbReference>
<dbReference type="Gene3D" id="1.10.287.610">
    <property type="entry name" value="Helix hairpin bin"/>
    <property type="match status" value="1"/>
</dbReference>
<dbReference type="HAMAP" id="MF_00291_B">
    <property type="entry name" value="Ribosomal_uS2_B"/>
    <property type="match status" value="1"/>
</dbReference>
<dbReference type="InterPro" id="IPR001865">
    <property type="entry name" value="Ribosomal_uS2"/>
</dbReference>
<dbReference type="InterPro" id="IPR005706">
    <property type="entry name" value="Ribosomal_uS2_bac/mit/plastid"/>
</dbReference>
<dbReference type="InterPro" id="IPR018130">
    <property type="entry name" value="Ribosomal_uS2_CS"/>
</dbReference>
<dbReference type="InterPro" id="IPR023591">
    <property type="entry name" value="Ribosomal_uS2_flav_dom_sf"/>
</dbReference>
<dbReference type="NCBIfam" id="TIGR01011">
    <property type="entry name" value="rpsB_bact"/>
    <property type="match status" value="1"/>
</dbReference>
<dbReference type="PANTHER" id="PTHR12534">
    <property type="entry name" value="30S RIBOSOMAL PROTEIN S2 PROKARYOTIC AND ORGANELLAR"/>
    <property type="match status" value="1"/>
</dbReference>
<dbReference type="PANTHER" id="PTHR12534:SF0">
    <property type="entry name" value="SMALL RIBOSOMAL SUBUNIT PROTEIN US2M"/>
    <property type="match status" value="1"/>
</dbReference>
<dbReference type="Pfam" id="PF00318">
    <property type="entry name" value="Ribosomal_S2"/>
    <property type="match status" value="1"/>
</dbReference>
<dbReference type="PRINTS" id="PR00395">
    <property type="entry name" value="RIBOSOMALS2"/>
</dbReference>
<dbReference type="SUPFAM" id="SSF52313">
    <property type="entry name" value="Ribosomal protein S2"/>
    <property type="match status" value="1"/>
</dbReference>
<dbReference type="PROSITE" id="PS00962">
    <property type="entry name" value="RIBOSOMAL_S2_1"/>
    <property type="match status" value="1"/>
</dbReference>
<dbReference type="PROSITE" id="PS00963">
    <property type="entry name" value="RIBOSOMAL_S2_2"/>
    <property type="match status" value="1"/>
</dbReference>
<comment type="similarity">
    <text evidence="1">Belongs to the universal ribosomal protein uS2 family.</text>
</comment>
<feature type="chain" id="PRO_1000004078" description="Small ribosomal subunit protein uS2">
    <location>
        <begin position="1"/>
        <end position="277"/>
    </location>
</feature>
<feature type="region of interest" description="Disordered" evidence="2">
    <location>
        <begin position="226"/>
        <end position="277"/>
    </location>
</feature>
<feature type="compositionally biased region" description="Low complexity" evidence="2">
    <location>
        <begin position="239"/>
        <end position="257"/>
    </location>
</feature>